<sequence length="379" mass="42892">MTNIRKSHPLIKIINQSFIDLPAPSNISSWWNFGSLLGICLALQIVTGLFLAMHYTSDTDTAFNSVSHMCRDVNYGWVLRYLHANGASMFFICLYLHVGRGIYYGSYMFKETWNMGVILLFAVMATAFLGYVLPWGQMSFWGATVITNLLSAIPYVGTDLVAWIWGGFAVDKATLTRFFAFHFLLPFIIAALVMVHLLFLHETGSNNPTGIPSNMDMIPFHPYYTIKDILGLFVMILVLSSLVMFSPDMLGDPDNYTPANPLSTPPHIKPEWYFLFAYAILRSIPNKLGGVLALVFSILVLFIFPLLHTSKQRSMAFRPFSQCLFWLLIANLLTLTWIGGQPVEQPYIIIGQLASILYFLIIIVIMPLTSLMENHLMKW</sequence>
<geneLocation type="mitochondrion"/>
<accession>Q8HQE6</accession>
<organism>
    <name type="scientific">Vespertilio sinensis</name>
    <name type="common">Asian particolored bat</name>
    <name type="synonym">Vespertilio superans</name>
    <dbReference type="NCBI Taxonomy" id="105273"/>
    <lineage>
        <taxon>Eukaryota</taxon>
        <taxon>Metazoa</taxon>
        <taxon>Chordata</taxon>
        <taxon>Craniata</taxon>
        <taxon>Vertebrata</taxon>
        <taxon>Euteleostomi</taxon>
        <taxon>Mammalia</taxon>
        <taxon>Eutheria</taxon>
        <taxon>Laurasiatheria</taxon>
        <taxon>Chiroptera</taxon>
        <taxon>Yangochiroptera</taxon>
        <taxon>Vespertilionidae</taxon>
        <taxon>Vespertilio</taxon>
    </lineage>
</organism>
<name>CYB_VESSI</name>
<comment type="function">
    <text evidence="2">Component of the ubiquinol-cytochrome c reductase complex (complex III or cytochrome b-c1 complex) that is part of the mitochondrial respiratory chain. The b-c1 complex mediates electron transfer from ubiquinol to cytochrome c. Contributes to the generation of a proton gradient across the mitochondrial membrane that is then used for ATP synthesis.</text>
</comment>
<comment type="cofactor">
    <cofactor evidence="2">
        <name>heme b</name>
        <dbReference type="ChEBI" id="CHEBI:60344"/>
    </cofactor>
    <text evidence="2">Binds 2 heme b groups non-covalently.</text>
</comment>
<comment type="subunit">
    <text evidence="2">The cytochrome bc1 complex contains 11 subunits: 3 respiratory subunits (MT-CYB, CYC1 and UQCRFS1), 2 core proteins (UQCRC1 and UQCRC2) and 6 low-molecular weight proteins (UQCRH/QCR6, UQCRB/QCR7, UQCRQ/QCR8, UQCR10/QCR9, UQCR11/QCR10 and a cleavage product of UQCRFS1). This cytochrome bc1 complex then forms a dimer.</text>
</comment>
<comment type="subcellular location">
    <subcellularLocation>
        <location evidence="2">Mitochondrion inner membrane</location>
        <topology evidence="2">Multi-pass membrane protein</topology>
    </subcellularLocation>
</comment>
<comment type="miscellaneous">
    <text evidence="1">Heme 1 (or BL or b562) is low-potential and absorbs at about 562 nm, and heme 2 (or BH or b566) is high-potential and absorbs at about 566 nm.</text>
</comment>
<comment type="similarity">
    <text evidence="3 4">Belongs to the cytochrome b family.</text>
</comment>
<comment type="caution">
    <text evidence="2">The full-length protein contains only eight transmembrane helices, not nine as predicted by bioinformatics tools.</text>
</comment>
<gene>
    <name type="primary">MT-CYB</name>
    <name type="synonym">COB</name>
    <name type="synonym">CYTB</name>
    <name type="synonym">MTCYB</name>
</gene>
<dbReference type="EMBL" id="AB085738">
    <property type="protein sequence ID" value="BAC16632.1"/>
    <property type="molecule type" value="Genomic_DNA"/>
</dbReference>
<dbReference type="SMR" id="Q8HQE6"/>
<dbReference type="GO" id="GO:0005743">
    <property type="term" value="C:mitochondrial inner membrane"/>
    <property type="evidence" value="ECO:0007669"/>
    <property type="project" value="UniProtKB-SubCell"/>
</dbReference>
<dbReference type="GO" id="GO:0045275">
    <property type="term" value="C:respiratory chain complex III"/>
    <property type="evidence" value="ECO:0007669"/>
    <property type="project" value="InterPro"/>
</dbReference>
<dbReference type="GO" id="GO:0046872">
    <property type="term" value="F:metal ion binding"/>
    <property type="evidence" value="ECO:0007669"/>
    <property type="project" value="UniProtKB-KW"/>
</dbReference>
<dbReference type="GO" id="GO:0008121">
    <property type="term" value="F:ubiquinol-cytochrome-c reductase activity"/>
    <property type="evidence" value="ECO:0007669"/>
    <property type="project" value="InterPro"/>
</dbReference>
<dbReference type="GO" id="GO:0006122">
    <property type="term" value="P:mitochondrial electron transport, ubiquinol to cytochrome c"/>
    <property type="evidence" value="ECO:0007669"/>
    <property type="project" value="TreeGrafter"/>
</dbReference>
<dbReference type="CDD" id="cd00290">
    <property type="entry name" value="cytochrome_b_C"/>
    <property type="match status" value="1"/>
</dbReference>
<dbReference type="CDD" id="cd00284">
    <property type="entry name" value="Cytochrome_b_N"/>
    <property type="match status" value="1"/>
</dbReference>
<dbReference type="FunFam" id="1.20.810.10:FF:000002">
    <property type="entry name" value="Cytochrome b"/>
    <property type="match status" value="1"/>
</dbReference>
<dbReference type="Gene3D" id="1.20.810.10">
    <property type="entry name" value="Cytochrome Bc1 Complex, Chain C"/>
    <property type="match status" value="1"/>
</dbReference>
<dbReference type="InterPro" id="IPR005798">
    <property type="entry name" value="Cyt_b/b6_C"/>
</dbReference>
<dbReference type="InterPro" id="IPR036150">
    <property type="entry name" value="Cyt_b/b6_C_sf"/>
</dbReference>
<dbReference type="InterPro" id="IPR005797">
    <property type="entry name" value="Cyt_b/b6_N"/>
</dbReference>
<dbReference type="InterPro" id="IPR027387">
    <property type="entry name" value="Cytb/b6-like_sf"/>
</dbReference>
<dbReference type="InterPro" id="IPR030689">
    <property type="entry name" value="Cytochrome_b"/>
</dbReference>
<dbReference type="InterPro" id="IPR048260">
    <property type="entry name" value="Cytochrome_b_C_euk/bac"/>
</dbReference>
<dbReference type="InterPro" id="IPR048259">
    <property type="entry name" value="Cytochrome_b_N_euk/bac"/>
</dbReference>
<dbReference type="InterPro" id="IPR016174">
    <property type="entry name" value="Di-haem_cyt_TM"/>
</dbReference>
<dbReference type="PANTHER" id="PTHR19271">
    <property type="entry name" value="CYTOCHROME B"/>
    <property type="match status" value="1"/>
</dbReference>
<dbReference type="PANTHER" id="PTHR19271:SF16">
    <property type="entry name" value="CYTOCHROME B"/>
    <property type="match status" value="1"/>
</dbReference>
<dbReference type="Pfam" id="PF00032">
    <property type="entry name" value="Cytochrom_B_C"/>
    <property type="match status" value="1"/>
</dbReference>
<dbReference type="Pfam" id="PF00033">
    <property type="entry name" value="Cytochrome_B"/>
    <property type="match status" value="1"/>
</dbReference>
<dbReference type="PIRSF" id="PIRSF038885">
    <property type="entry name" value="COB"/>
    <property type="match status" value="1"/>
</dbReference>
<dbReference type="SUPFAM" id="SSF81648">
    <property type="entry name" value="a domain/subunit of cytochrome bc1 complex (Ubiquinol-cytochrome c reductase)"/>
    <property type="match status" value="1"/>
</dbReference>
<dbReference type="SUPFAM" id="SSF81342">
    <property type="entry name" value="Transmembrane di-heme cytochromes"/>
    <property type="match status" value="1"/>
</dbReference>
<dbReference type="PROSITE" id="PS51003">
    <property type="entry name" value="CYTB_CTER"/>
    <property type="match status" value="1"/>
</dbReference>
<dbReference type="PROSITE" id="PS51002">
    <property type="entry name" value="CYTB_NTER"/>
    <property type="match status" value="1"/>
</dbReference>
<keyword id="KW-0249">Electron transport</keyword>
<keyword id="KW-0349">Heme</keyword>
<keyword id="KW-0408">Iron</keyword>
<keyword id="KW-0472">Membrane</keyword>
<keyword id="KW-0479">Metal-binding</keyword>
<keyword id="KW-0496">Mitochondrion</keyword>
<keyword id="KW-0999">Mitochondrion inner membrane</keyword>
<keyword id="KW-0679">Respiratory chain</keyword>
<keyword id="KW-0812">Transmembrane</keyword>
<keyword id="KW-1133">Transmembrane helix</keyword>
<keyword id="KW-0813">Transport</keyword>
<keyword id="KW-0830">Ubiquinone</keyword>
<proteinExistence type="inferred from homology"/>
<feature type="chain" id="PRO_0000061715" description="Cytochrome b">
    <location>
        <begin position="1"/>
        <end position="379"/>
    </location>
</feature>
<feature type="transmembrane region" description="Helical" evidence="2">
    <location>
        <begin position="33"/>
        <end position="53"/>
    </location>
</feature>
<feature type="transmembrane region" description="Helical" evidence="2">
    <location>
        <begin position="77"/>
        <end position="98"/>
    </location>
</feature>
<feature type="transmembrane region" description="Helical" evidence="2">
    <location>
        <begin position="113"/>
        <end position="133"/>
    </location>
</feature>
<feature type="transmembrane region" description="Helical" evidence="2">
    <location>
        <begin position="178"/>
        <end position="198"/>
    </location>
</feature>
<feature type="transmembrane region" description="Helical" evidence="2">
    <location>
        <begin position="226"/>
        <end position="246"/>
    </location>
</feature>
<feature type="transmembrane region" description="Helical" evidence="2">
    <location>
        <begin position="288"/>
        <end position="308"/>
    </location>
</feature>
<feature type="transmembrane region" description="Helical" evidence="2">
    <location>
        <begin position="320"/>
        <end position="340"/>
    </location>
</feature>
<feature type="transmembrane region" description="Helical" evidence="2">
    <location>
        <begin position="347"/>
        <end position="367"/>
    </location>
</feature>
<feature type="binding site" description="axial binding residue" evidence="2">
    <location>
        <position position="83"/>
    </location>
    <ligand>
        <name>heme b</name>
        <dbReference type="ChEBI" id="CHEBI:60344"/>
        <label>b562</label>
    </ligand>
    <ligandPart>
        <name>Fe</name>
        <dbReference type="ChEBI" id="CHEBI:18248"/>
    </ligandPart>
</feature>
<feature type="binding site" description="axial binding residue" evidence="2">
    <location>
        <position position="97"/>
    </location>
    <ligand>
        <name>heme b</name>
        <dbReference type="ChEBI" id="CHEBI:60344"/>
        <label>b566</label>
    </ligand>
    <ligandPart>
        <name>Fe</name>
        <dbReference type="ChEBI" id="CHEBI:18248"/>
    </ligandPart>
</feature>
<feature type="binding site" description="axial binding residue" evidence="2">
    <location>
        <position position="182"/>
    </location>
    <ligand>
        <name>heme b</name>
        <dbReference type="ChEBI" id="CHEBI:60344"/>
        <label>b562</label>
    </ligand>
    <ligandPart>
        <name>Fe</name>
        <dbReference type="ChEBI" id="CHEBI:18248"/>
    </ligandPart>
</feature>
<feature type="binding site" description="axial binding residue" evidence="2">
    <location>
        <position position="196"/>
    </location>
    <ligand>
        <name>heme b</name>
        <dbReference type="ChEBI" id="CHEBI:60344"/>
        <label>b566</label>
    </ligand>
    <ligandPart>
        <name>Fe</name>
        <dbReference type="ChEBI" id="CHEBI:18248"/>
    </ligandPart>
</feature>
<feature type="binding site" evidence="2">
    <location>
        <position position="201"/>
    </location>
    <ligand>
        <name>a ubiquinone</name>
        <dbReference type="ChEBI" id="CHEBI:16389"/>
    </ligand>
</feature>
<reference key="1">
    <citation type="submission" date="2002-05" db="EMBL/GenBank/DDBJ databases">
        <title>Bats cytochrome b gene.</title>
        <authorList>
            <person name="Sakai T."/>
            <person name="Kikkawa Y."/>
            <person name="Tuchiya K."/>
            <person name="Harada M."/>
            <person name="Kanoe M."/>
            <person name="Yoshiyuki M."/>
            <person name="Yonekawa H."/>
        </authorList>
    </citation>
    <scope>NUCLEOTIDE SEQUENCE [GENOMIC DNA]</scope>
</reference>
<evidence type="ECO:0000250" key="1"/>
<evidence type="ECO:0000250" key="2">
    <source>
        <dbReference type="UniProtKB" id="P00157"/>
    </source>
</evidence>
<evidence type="ECO:0000255" key="3">
    <source>
        <dbReference type="PROSITE-ProRule" id="PRU00967"/>
    </source>
</evidence>
<evidence type="ECO:0000255" key="4">
    <source>
        <dbReference type="PROSITE-ProRule" id="PRU00968"/>
    </source>
</evidence>
<protein>
    <recommendedName>
        <fullName>Cytochrome b</fullName>
    </recommendedName>
    <alternativeName>
        <fullName>Complex III subunit 3</fullName>
    </alternativeName>
    <alternativeName>
        <fullName>Complex III subunit III</fullName>
    </alternativeName>
    <alternativeName>
        <fullName>Cytochrome b-c1 complex subunit 3</fullName>
    </alternativeName>
    <alternativeName>
        <fullName>Ubiquinol-cytochrome-c reductase complex cytochrome b subunit</fullName>
    </alternativeName>
</protein>